<name>MNMG_PSEA8</name>
<comment type="function">
    <text evidence="1">NAD-binding protein involved in the addition of a carboxymethylaminomethyl (cmnm) group at the wobble position (U34) of certain tRNAs, forming tRNA-cmnm(5)s(2)U34.</text>
</comment>
<comment type="cofactor">
    <cofactor evidence="1">
        <name>FAD</name>
        <dbReference type="ChEBI" id="CHEBI:57692"/>
    </cofactor>
</comment>
<comment type="subunit">
    <text evidence="1">Homodimer. Heterotetramer of two MnmE and two MnmG subunits.</text>
</comment>
<comment type="subcellular location">
    <subcellularLocation>
        <location evidence="1">Cytoplasm</location>
    </subcellularLocation>
</comment>
<comment type="similarity">
    <text evidence="1">Belongs to the MnmG family.</text>
</comment>
<accession>B7V7A2</accession>
<gene>
    <name evidence="1" type="primary">mnmG</name>
    <name evidence="1" type="synonym">gidA</name>
    <name type="ordered locus">PLES_59611</name>
</gene>
<organism>
    <name type="scientific">Pseudomonas aeruginosa (strain LESB58)</name>
    <dbReference type="NCBI Taxonomy" id="557722"/>
    <lineage>
        <taxon>Bacteria</taxon>
        <taxon>Pseudomonadati</taxon>
        <taxon>Pseudomonadota</taxon>
        <taxon>Gammaproteobacteria</taxon>
        <taxon>Pseudomonadales</taxon>
        <taxon>Pseudomonadaceae</taxon>
        <taxon>Pseudomonas</taxon>
    </lineage>
</organism>
<proteinExistence type="inferred from homology"/>
<evidence type="ECO:0000255" key="1">
    <source>
        <dbReference type="HAMAP-Rule" id="MF_00129"/>
    </source>
</evidence>
<feature type="chain" id="PRO_1000117720" description="tRNA uridine 5-carboxymethylaminomethyl modification enzyme MnmG">
    <location>
        <begin position="1"/>
        <end position="630"/>
    </location>
</feature>
<feature type="binding site" evidence="1">
    <location>
        <begin position="13"/>
        <end position="18"/>
    </location>
    <ligand>
        <name>FAD</name>
        <dbReference type="ChEBI" id="CHEBI:57692"/>
    </ligand>
</feature>
<feature type="binding site" evidence="1">
    <location>
        <begin position="273"/>
        <end position="287"/>
    </location>
    <ligand>
        <name>NAD(+)</name>
        <dbReference type="ChEBI" id="CHEBI:57540"/>
    </ligand>
</feature>
<protein>
    <recommendedName>
        <fullName evidence="1">tRNA uridine 5-carboxymethylaminomethyl modification enzyme MnmG</fullName>
    </recommendedName>
    <alternativeName>
        <fullName evidence="1">Glucose-inhibited division protein A</fullName>
    </alternativeName>
</protein>
<reference key="1">
    <citation type="journal article" date="2009" name="Genome Res.">
        <title>Newly introduced genomic prophage islands are critical determinants of in vivo competitiveness in the Liverpool epidemic strain of Pseudomonas aeruginosa.</title>
        <authorList>
            <person name="Winstanley C."/>
            <person name="Langille M.G.I."/>
            <person name="Fothergill J.L."/>
            <person name="Kukavica-Ibrulj I."/>
            <person name="Paradis-Bleau C."/>
            <person name="Sanschagrin F."/>
            <person name="Thomson N.R."/>
            <person name="Winsor G.L."/>
            <person name="Quail M.A."/>
            <person name="Lennard N."/>
            <person name="Bignell A."/>
            <person name="Clarke L."/>
            <person name="Seeger K."/>
            <person name="Saunders D."/>
            <person name="Harris D."/>
            <person name="Parkhill J."/>
            <person name="Hancock R.E.W."/>
            <person name="Brinkman F.S.L."/>
            <person name="Levesque R.C."/>
        </authorList>
    </citation>
    <scope>NUCLEOTIDE SEQUENCE [LARGE SCALE GENOMIC DNA]</scope>
    <source>
        <strain>LESB58</strain>
    </source>
</reference>
<dbReference type="EMBL" id="FM209186">
    <property type="protein sequence ID" value="CAW30715.1"/>
    <property type="molecule type" value="Genomic_DNA"/>
</dbReference>
<dbReference type="RefSeq" id="WP_003100244.1">
    <property type="nucleotide sequence ID" value="NC_011770.1"/>
</dbReference>
<dbReference type="SMR" id="B7V7A2"/>
<dbReference type="KEGG" id="pag:PLES_59611"/>
<dbReference type="HOGENOM" id="CLU_007831_2_2_6"/>
<dbReference type="GO" id="GO:0005829">
    <property type="term" value="C:cytosol"/>
    <property type="evidence" value="ECO:0007669"/>
    <property type="project" value="TreeGrafter"/>
</dbReference>
<dbReference type="GO" id="GO:0050660">
    <property type="term" value="F:flavin adenine dinucleotide binding"/>
    <property type="evidence" value="ECO:0007669"/>
    <property type="project" value="UniProtKB-UniRule"/>
</dbReference>
<dbReference type="GO" id="GO:0030488">
    <property type="term" value="P:tRNA methylation"/>
    <property type="evidence" value="ECO:0007669"/>
    <property type="project" value="TreeGrafter"/>
</dbReference>
<dbReference type="GO" id="GO:0002098">
    <property type="term" value="P:tRNA wobble uridine modification"/>
    <property type="evidence" value="ECO:0007669"/>
    <property type="project" value="InterPro"/>
</dbReference>
<dbReference type="FunFam" id="1.10.10.1800:FF:000001">
    <property type="entry name" value="tRNA uridine 5-carboxymethylaminomethyl modification enzyme MnmG"/>
    <property type="match status" value="1"/>
</dbReference>
<dbReference type="FunFam" id="1.10.150.570:FF:000001">
    <property type="entry name" value="tRNA uridine 5-carboxymethylaminomethyl modification enzyme MnmG"/>
    <property type="match status" value="1"/>
</dbReference>
<dbReference type="FunFam" id="3.50.50.60:FF:000002">
    <property type="entry name" value="tRNA uridine 5-carboxymethylaminomethyl modification enzyme MnmG"/>
    <property type="match status" value="1"/>
</dbReference>
<dbReference type="FunFam" id="3.50.50.60:FF:000010">
    <property type="entry name" value="tRNA uridine 5-carboxymethylaminomethyl modification enzyme MnmG"/>
    <property type="match status" value="1"/>
</dbReference>
<dbReference type="Gene3D" id="3.50.50.60">
    <property type="entry name" value="FAD/NAD(P)-binding domain"/>
    <property type="match status" value="2"/>
</dbReference>
<dbReference type="Gene3D" id="1.10.150.570">
    <property type="entry name" value="GidA associated domain, C-terminal subdomain"/>
    <property type="match status" value="1"/>
</dbReference>
<dbReference type="Gene3D" id="1.10.10.1800">
    <property type="entry name" value="tRNA uridine 5-carboxymethylaminomethyl modification enzyme MnmG/GidA"/>
    <property type="match status" value="1"/>
</dbReference>
<dbReference type="HAMAP" id="MF_00129">
    <property type="entry name" value="MnmG_GidA"/>
    <property type="match status" value="1"/>
</dbReference>
<dbReference type="InterPro" id="IPR036188">
    <property type="entry name" value="FAD/NAD-bd_sf"/>
</dbReference>
<dbReference type="InterPro" id="IPR049312">
    <property type="entry name" value="GIDA_C_N"/>
</dbReference>
<dbReference type="InterPro" id="IPR004416">
    <property type="entry name" value="MnmG"/>
</dbReference>
<dbReference type="InterPro" id="IPR002218">
    <property type="entry name" value="MnmG-rel"/>
</dbReference>
<dbReference type="InterPro" id="IPR020595">
    <property type="entry name" value="MnmG-rel_CS"/>
</dbReference>
<dbReference type="InterPro" id="IPR026904">
    <property type="entry name" value="MnmG_C"/>
</dbReference>
<dbReference type="InterPro" id="IPR047001">
    <property type="entry name" value="MnmG_C_subdom"/>
</dbReference>
<dbReference type="InterPro" id="IPR044920">
    <property type="entry name" value="MnmG_C_subdom_sf"/>
</dbReference>
<dbReference type="InterPro" id="IPR040131">
    <property type="entry name" value="MnmG_N"/>
</dbReference>
<dbReference type="NCBIfam" id="TIGR00136">
    <property type="entry name" value="mnmG_gidA"/>
    <property type="match status" value="1"/>
</dbReference>
<dbReference type="PANTHER" id="PTHR11806">
    <property type="entry name" value="GLUCOSE INHIBITED DIVISION PROTEIN A"/>
    <property type="match status" value="1"/>
</dbReference>
<dbReference type="PANTHER" id="PTHR11806:SF0">
    <property type="entry name" value="PROTEIN MTO1 HOMOLOG, MITOCHONDRIAL"/>
    <property type="match status" value="1"/>
</dbReference>
<dbReference type="Pfam" id="PF01134">
    <property type="entry name" value="GIDA"/>
    <property type="match status" value="1"/>
</dbReference>
<dbReference type="Pfam" id="PF21680">
    <property type="entry name" value="GIDA_C_1st"/>
    <property type="match status" value="1"/>
</dbReference>
<dbReference type="Pfam" id="PF13932">
    <property type="entry name" value="SAM_GIDA_C"/>
    <property type="match status" value="1"/>
</dbReference>
<dbReference type="PRINTS" id="PR00368">
    <property type="entry name" value="FADPNR"/>
</dbReference>
<dbReference type="SMART" id="SM01228">
    <property type="entry name" value="GIDA_assoc_3"/>
    <property type="match status" value="1"/>
</dbReference>
<dbReference type="SUPFAM" id="SSF51905">
    <property type="entry name" value="FAD/NAD(P)-binding domain"/>
    <property type="match status" value="1"/>
</dbReference>
<dbReference type="PROSITE" id="PS01280">
    <property type="entry name" value="GIDA_1"/>
    <property type="match status" value="1"/>
</dbReference>
<dbReference type="PROSITE" id="PS01281">
    <property type="entry name" value="GIDA_2"/>
    <property type="match status" value="1"/>
</dbReference>
<keyword id="KW-0963">Cytoplasm</keyword>
<keyword id="KW-0274">FAD</keyword>
<keyword id="KW-0285">Flavoprotein</keyword>
<keyword id="KW-0520">NAD</keyword>
<keyword id="KW-0819">tRNA processing</keyword>
<sequence>MDFPTRFDVIVIGGGHAGTEAALAAARMGVKTLLLTHNVETLGQMSCNPAIGGIGKSHLVKEIDALGGAMAEATDKGGIQFRILNSRKGPAVRATRAQADRVLYKAAIRHTLENQPNLWIFQQACDDLIVEQDQVRGVVTQMGLRFHADNVVLTTGTFLGGLIHIGLENYSGGRAGDPPSIALARRLRELPLRVGRLKTGTPPRIDGRSVDFSVMTEQPGDTPIPVMSFLGSKEQHPEQVSCWITHTNARTHEIIAANLDRSPMYSGVIEGIGPRYCPSIEDKIHRFADKESHQVFLEPEGLTTHELYPNGISTSLPFDVQLQIVRSIRGMENAHIVRPGYAIEYDFFDPRDLRYSLETKVIGGLFFAGQINGTTGYEEAGAQGLLAGANAALRSQGKDSWCPRRDEAYIGVLVDDLITLGTQEPYRMFTSRAEYRLILREDNADLRLTEKGRELGLVDDRRWAAFEAKREGIEREEQRLKSTWVRPNTPQGDAIAERFGTPLTHEYNLLNLLSRPEIDYAGLVEITGDAVDNPQVAEQVEIRTKYAGYIDRQQEEIARLRASEDTRLPVDIDYLGISGLSKEIQNKLNQARPETLGQASRIPGVTPAAISLLLIHLKKRASGRQLEQSA</sequence>